<accession>P09459</accession>
<accession>O72641</accession>
<sequence length="489" mass="53110">MSSVFDEYEQLLAAQTRPNGAHGGGEKGSTLKVDVPVFTLNSDDPEDRWNFAVFCLRIAVSEDANKPLRQGALISLLCSHSQVMRNHVALAGKQNEATLAVLEIDGFANGMPQFNNRSGVSEERAQRFAMIAGSLPRACSNGTPFVTAGAEDDAPEDITDTLERILSIQAQVWVTVAKAMTAYETADESETRRINKYMQQGRVQKKYILYPVCRSTIQLTIRQSLAVRIFLVSELKRGRNTAGGTSTYYNLVGDVDSYIRNTGLTAFFLTLKYGINTKTSALALSSLSGDIQKMKQLMRLYRMKGDNAPYMTLLGDSDQMSFAPAEYAQLYSFAMGMASVLDKGTGKYQFARDFMSTSFWRLGVEYAQAQGSSINEDMAAELKLTPAARRGLAAAAQRVSEETSSIDMPTQQVGVLTGLSEGGSQALQGGSNRSQGQPEAGDGETQFLDLMRAVANSMREAPNSAQGTPQSGPPPTPGPSQDNDTDWGY</sequence>
<organism>
    <name type="scientific">Avian paramyxovirus 1</name>
    <name type="common">NDV</name>
    <name type="synonym">Avian orthoavulavirus 1</name>
    <dbReference type="NCBI Taxonomy" id="2560319"/>
    <lineage>
        <taxon>Viruses</taxon>
        <taxon>Riboviria</taxon>
        <taxon>Orthornavirae</taxon>
        <taxon>Negarnaviricota</taxon>
        <taxon>Haploviricotina</taxon>
        <taxon>Monjiviricetes</taxon>
        <taxon>Mononegavirales</taxon>
        <taxon>Paramyxoviridae</taxon>
        <taxon>Avulavirinae</taxon>
        <taxon>Orthoavulavirus</taxon>
        <taxon>Orthoavulavirus javaense</taxon>
    </lineage>
</organism>
<proteinExistence type="evidence at protein level"/>
<gene>
    <name type="primary">N</name>
    <name type="synonym">NP</name>
</gene>
<reference key="1">
    <citation type="journal article" date="1998" name="J. Gen. Virol.">
        <title>Nucleotide sequences of the trailer, nucleocapsid protein gene and intergenic regions of Newcastle disease virus strain Beaudette C and completion of the entire genome sequence.</title>
        <authorList>
            <person name="Krishnamurthy S."/>
            <person name="Samal S.K."/>
        </authorList>
    </citation>
    <scope>NUCLEOTIDE SEQUENCE [GENOMIC RNA]</scope>
</reference>
<reference key="2">
    <citation type="journal article" date="2000" name="Avian Dis.">
        <title>Nucleotide sequence and vaccinia expression of the nucleoprotein of a highly virulent, neurotropic strain of Newcastle disease virus.</title>
        <authorList>
            <person name="Ward M.D."/>
            <person name="Fuller F.J."/>
            <person name="Mehrotra Y."/>
            <person name="De Buysscher E.V."/>
        </authorList>
    </citation>
    <scope>NUCLEOTIDE SEQUENCE [MRNA]</scope>
    <source>
        <strain>Texas GB</strain>
    </source>
</reference>
<reference key="3">
    <citation type="journal article" date="2002" name="Virus Res.">
        <title>Nucleotide sequence analysis of the Newcastle disease virus nucleocapsid protein gene and phylogenetic relationships among the Paramyxoviridae.</title>
        <authorList>
            <person name="Seal B.S."/>
            <person name="Crawford J.M."/>
            <person name="Sellers H.S."/>
            <person name="Locke D.P."/>
            <person name="King D.J."/>
        </authorList>
    </citation>
    <scope>NUCLEOTIDE SEQUENCE [GENOMIC RNA]</scope>
</reference>
<reference key="4">
    <citation type="submission" date="2005-05" db="EMBL/GenBank/DDBJ databases">
        <title>Genomic sequence for isolate AQI-ND026 of Newcastle disease virus.</title>
        <authorList>
            <person name="Wang Z."/>
            <person name="Bao J."/>
            <person name="Chen J."/>
            <person name="Zhen D."/>
            <person name="Chen Y."/>
            <person name="Song C."/>
        </authorList>
    </citation>
    <scope>NUCLEOTIDE SEQUENCE [GENOMIC RNA]</scope>
    <source>
        <strain>AQI-ND026</strain>
    </source>
</reference>
<reference key="5">
    <citation type="journal article" date="1985" name="Virology">
        <title>RNA sequence and transcriptional properties of the 3' end of the Newcastle disease virus genome.</title>
        <authorList>
            <person name="Kurilla M.G."/>
            <person name="Stone H.O."/>
            <person name="Keene J.D."/>
        </authorList>
    </citation>
    <scope>NUCLEOTIDE SEQUENCE [GENOMIC RNA] OF 1-42</scope>
</reference>
<reference key="6">
    <citation type="journal article" date="2004" name="Arch. Virol.">
        <title>Regions on nucleocapsid protein of Newcastle disease virus that interact with its phosphoprotein.</title>
        <authorList>
            <person name="Kho C.L."/>
            <person name="Tan W.S."/>
            <person name="Tey B.T."/>
            <person name="Yusoff K."/>
        </authorList>
    </citation>
    <scope>INTERACTION WITH P PROTEIN</scope>
</reference>
<dbReference type="EMBL" id="AF064091">
    <property type="protein sequence ID" value="AAC72076.1"/>
    <property type="molecule type" value="Genomic_RNA"/>
</dbReference>
<dbReference type="EMBL" id="AF144730">
    <property type="protein sequence ID" value="AAF14883.1"/>
    <property type="molecule type" value="mRNA"/>
</dbReference>
<dbReference type="EMBL" id="AF419409">
    <property type="protein sequence ID" value="AAL09062.1"/>
    <property type="molecule type" value="Genomic_RNA"/>
</dbReference>
<dbReference type="EMBL" id="DQ060053">
    <property type="protein sequence ID" value="AAY68569.1"/>
    <property type="molecule type" value="Genomic_RNA"/>
</dbReference>
<dbReference type="EMBL" id="M11204">
    <property type="protein sequence ID" value="AAA46676.1"/>
    <property type="molecule type" value="Genomic_RNA"/>
</dbReference>
<dbReference type="SMR" id="P09459"/>
<dbReference type="Proteomes" id="UP000146580">
    <property type="component" value="Genome"/>
</dbReference>
<dbReference type="GO" id="GO:0019029">
    <property type="term" value="C:helical viral capsid"/>
    <property type="evidence" value="ECO:0007669"/>
    <property type="project" value="UniProtKB-KW"/>
</dbReference>
<dbReference type="GO" id="GO:0030430">
    <property type="term" value="C:host cell cytoplasm"/>
    <property type="evidence" value="ECO:0007669"/>
    <property type="project" value="UniProtKB-SubCell"/>
</dbReference>
<dbReference type="GO" id="GO:1990904">
    <property type="term" value="C:ribonucleoprotein complex"/>
    <property type="evidence" value="ECO:0007669"/>
    <property type="project" value="UniProtKB-KW"/>
</dbReference>
<dbReference type="GO" id="GO:0019013">
    <property type="term" value="C:viral nucleocapsid"/>
    <property type="evidence" value="ECO:0007669"/>
    <property type="project" value="UniProtKB-KW"/>
</dbReference>
<dbReference type="GO" id="GO:0003723">
    <property type="term" value="F:RNA binding"/>
    <property type="evidence" value="ECO:0007669"/>
    <property type="project" value="UniProtKB-KW"/>
</dbReference>
<dbReference type="GO" id="GO:0005198">
    <property type="term" value="F:structural molecule activity"/>
    <property type="evidence" value="ECO:0007669"/>
    <property type="project" value="InterPro"/>
</dbReference>
<dbReference type="GO" id="GO:0039697">
    <property type="term" value="P:negative stranded viral RNA transcription"/>
    <property type="evidence" value="ECO:0000314"/>
    <property type="project" value="UniProtKB"/>
</dbReference>
<dbReference type="InterPro" id="IPR002021">
    <property type="entry name" value="Paramyx_ncap"/>
</dbReference>
<dbReference type="Pfam" id="PF00973">
    <property type="entry name" value="Paramyxo_ncap"/>
    <property type="match status" value="1"/>
</dbReference>
<keyword id="KW-0167">Capsid protein</keyword>
<keyword id="KW-1139">Helical capsid protein</keyword>
<keyword id="KW-1035">Host cytoplasm</keyword>
<keyword id="KW-0687">Ribonucleoprotein</keyword>
<keyword id="KW-0694">RNA-binding</keyword>
<keyword id="KW-0543">Viral nucleoprotein</keyword>
<keyword id="KW-0946">Virion</keyword>
<evidence type="ECO:0000250" key="1"/>
<evidence type="ECO:0000250" key="2">
    <source>
        <dbReference type="UniProtKB" id="O57286"/>
    </source>
</evidence>
<evidence type="ECO:0000250" key="3">
    <source>
        <dbReference type="UniProtKB" id="O89339"/>
    </source>
</evidence>
<evidence type="ECO:0000250" key="4">
    <source>
        <dbReference type="UniProtKB" id="P06159"/>
    </source>
</evidence>
<evidence type="ECO:0000250" key="5">
    <source>
        <dbReference type="UniProtKB" id="Q07097"/>
    </source>
</evidence>
<evidence type="ECO:0000256" key="6">
    <source>
        <dbReference type="SAM" id="MobiDB-lite"/>
    </source>
</evidence>
<evidence type="ECO:0000305" key="7"/>
<comment type="function">
    <text evidence="3 4">Forms the helical nucleocapsid (NC) in a ratio of 1 N per 6 ribonucleotides, protecting the genome from nucleases (By similarity). The encapsidated genomic RNA serves as template for transcription and replication; encapsidation by N is coupled to RNA synthesis. Forms the encapsidation complex with the phosphoprotein protein P. Before encapsidation, the newly synthesized free N protein, so-called N0, is chaperoned by P (By similarity).</text>
</comment>
<comment type="subunit">
    <text evidence="2 4 5">Homomultimer; forms the nucleocapsid (By similarity). Binds to the viral genomic RNA (By similarity). N0 interacts with the phosphoprotein (via N-terminus); this interaction allows P to chaperon N0 to avoid N polymerization before encapsidation. Interacts as N-RNA template with the phosphoprotein (via C-terminus); this interaction positions the polymerase on the template (By similarity).</text>
</comment>
<comment type="subcellular location">
    <subcellularLocation>
        <location evidence="7">Virion</location>
    </subcellularLocation>
    <subcellularLocation>
        <location>Host cytoplasm</location>
    </subcellularLocation>
</comment>
<comment type="domain">
    <text evidence="4">Ncore is globular and carries the regions required for self-assembly and RNA-binding. Ntail is an intrinsically disordered monomeric domain in the C-terminus.</text>
</comment>
<comment type="similarity">
    <text evidence="7">Belongs to the paramyxoviruses nucleocapsid family.</text>
</comment>
<name>NCAP_NCDV</name>
<feature type="chain" id="PRO_0000142664" description="Nucleoprotein">
    <location>
        <begin position="1"/>
        <end position="489"/>
    </location>
</feature>
<feature type="region of interest" description="Ncore" evidence="4">
    <location>
        <begin position="1"/>
        <end position="402"/>
    </location>
</feature>
<feature type="region of interest" description="P protein-binding" evidence="1">
    <location>
        <begin position="1"/>
        <end position="375"/>
    </location>
</feature>
<feature type="region of interest" description="Ntail" evidence="4">
    <location>
        <begin position="403"/>
        <end position="489"/>
    </location>
</feature>
<feature type="region of interest" description="Disordered" evidence="6">
    <location>
        <begin position="421"/>
        <end position="489"/>
    </location>
</feature>
<feature type="compositionally biased region" description="Polar residues" evidence="6">
    <location>
        <begin position="422"/>
        <end position="437"/>
    </location>
</feature>
<feature type="binding site" evidence="2">
    <location>
        <position position="178"/>
    </location>
    <ligand>
        <name>RNA</name>
        <dbReference type="ChEBI" id="CHEBI:33697"/>
    </ligand>
</feature>
<feature type="binding site" evidence="2">
    <location>
        <position position="193"/>
    </location>
    <ligand>
        <name>RNA</name>
        <dbReference type="ChEBI" id="CHEBI:33697"/>
    </ligand>
</feature>
<feature type="binding site" evidence="2">
    <location>
        <position position="258"/>
    </location>
    <ligand>
        <name>RNA</name>
        <dbReference type="ChEBI" id="CHEBI:33697"/>
    </ligand>
</feature>
<feature type="binding site" evidence="2">
    <location>
        <position position="348"/>
    </location>
    <ligand>
        <name>RNA</name>
        <dbReference type="ChEBI" id="CHEBI:33697"/>
    </ligand>
</feature>
<feature type="binding site" evidence="2">
    <location>
        <position position="352"/>
    </location>
    <ligand>
        <name>RNA</name>
        <dbReference type="ChEBI" id="CHEBI:33697"/>
    </ligand>
</feature>
<protein>
    <recommendedName>
        <fullName>Nucleoprotein</fullName>
    </recommendedName>
    <alternativeName>
        <fullName>Nucleocapsid protein</fullName>
        <shortName>NP</shortName>
        <shortName>Protein N</shortName>
    </alternativeName>
</protein>